<proteinExistence type="evidence at protein level"/>
<sequence>MLKNKILATTLSVSLLAPLANPLLENAKAANDTEDIGKGSDIEIIKRTEDKTSNKWGVTQNIQFDFVKDKKYNKDALILKMQGFISSRTTYYNYKKTNHVKAMRWPFQYNIGLKTNDKYVSLINYLPKNKIESTNVSQTLGYNIGGNFQSAPSLGGNGSFNYSKSISYTQQNYVSEVEQQNSKSVLWGVKANSFATESGQKSAFDSDLFVGYKPHSKDPRDYFVPDSELPPLVQSGFNPSFIATVSHEKGSSDTSEFEITYGRNMDVTHAIKRSTHYGNSYLDGHRVHNAFVNRNYTVKYEVNWKTHEIKVKGQN</sequence>
<comment type="function">
    <text evidence="1">Toxin that seems to act by forming pores in the membrane of the cell. Has a hemolytic and a leucotoxic activity (By similarity).</text>
</comment>
<comment type="subunit">
    <text evidence="1">Toxicity requires sequential binding and synergistic association of a class S and a class F component which form heterooligomeric complexes. HlgC (class S) associates with HlgB (class F) thus forming an CB toxin (By similarity).</text>
</comment>
<comment type="similarity">
    <text evidence="3">Belongs to the aerolysin family.</text>
</comment>
<gene>
    <name type="primary">hlgC</name>
    <name type="ordered locus">SAV2420</name>
</gene>
<feature type="signal peptide" evidence="2">
    <location>
        <begin position="1"/>
        <end position="29"/>
    </location>
</feature>
<feature type="chain" id="PRO_0000045221" description="Gamma-hemolysin component C">
    <location>
        <begin position="30"/>
        <end position="315"/>
    </location>
</feature>
<feature type="strand" evidence="4">
    <location>
        <begin position="42"/>
        <end position="53"/>
    </location>
</feature>
<feature type="turn" evidence="4">
    <location>
        <begin position="54"/>
        <end position="57"/>
    </location>
</feature>
<feature type="strand" evidence="4">
    <location>
        <begin position="58"/>
        <end position="69"/>
    </location>
</feature>
<feature type="strand" evidence="4">
    <location>
        <begin position="72"/>
        <end position="86"/>
    </location>
</feature>
<feature type="strand" evidence="4">
    <location>
        <begin position="90"/>
        <end position="93"/>
    </location>
</feature>
<feature type="strand" evidence="4">
    <location>
        <begin position="98"/>
        <end position="115"/>
    </location>
</feature>
<feature type="strand" evidence="4">
    <location>
        <begin position="120"/>
        <end position="127"/>
    </location>
</feature>
<feature type="strand" evidence="4">
    <location>
        <begin position="133"/>
        <end position="144"/>
    </location>
</feature>
<feature type="strand" evidence="4">
    <location>
        <begin position="160"/>
        <end position="181"/>
    </location>
</feature>
<feature type="strand" evidence="4">
    <location>
        <begin position="184"/>
        <end position="191"/>
    </location>
</feature>
<feature type="strand" evidence="4">
    <location>
        <begin position="193"/>
        <end position="196"/>
    </location>
</feature>
<feature type="strand" evidence="4">
    <location>
        <begin position="199"/>
        <end position="202"/>
    </location>
</feature>
<feature type="turn" evidence="4">
    <location>
        <begin position="206"/>
        <end position="209"/>
    </location>
</feature>
<feature type="helix" evidence="4">
    <location>
        <begin position="219"/>
        <end position="222"/>
    </location>
</feature>
<feature type="helix" evidence="4">
    <location>
        <begin position="226"/>
        <end position="228"/>
    </location>
</feature>
<feature type="helix" evidence="4">
    <location>
        <begin position="231"/>
        <end position="234"/>
    </location>
</feature>
<feature type="strand" evidence="4">
    <location>
        <begin position="241"/>
        <end position="247"/>
    </location>
</feature>
<feature type="strand" evidence="4">
    <location>
        <begin position="253"/>
        <end position="273"/>
    </location>
</feature>
<feature type="strand" evidence="4">
    <location>
        <begin position="281"/>
        <end position="303"/>
    </location>
</feature>
<feature type="turn" evidence="4">
    <location>
        <begin position="304"/>
        <end position="306"/>
    </location>
</feature>
<feature type="strand" evidence="4">
    <location>
        <begin position="309"/>
        <end position="314"/>
    </location>
</feature>
<accession>Q99RL1</accession>
<protein>
    <recommendedName>
        <fullName>Gamma-hemolysin component C</fullName>
    </recommendedName>
</protein>
<name>HLGC_STAAM</name>
<dbReference type="EMBL" id="BA000017">
    <property type="protein sequence ID" value="BAB58582.1"/>
    <property type="molecule type" value="Genomic_DNA"/>
</dbReference>
<dbReference type="RefSeq" id="WP_000916704.1">
    <property type="nucleotide sequence ID" value="NC_002758.2"/>
</dbReference>
<dbReference type="PDB" id="4P1X">
    <property type="method" value="X-ray"/>
    <property type="resolution" value="2.40 A"/>
    <property type="chains" value="B/D/F/H=30-315"/>
</dbReference>
<dbReference type="PDBsum" id="4P1X"/>
<dbReference type="SMR" id="Q99RL1"/>
<dbReference type="KEGG" id="sav:SAV2420"/>
<dbReference type="HOGENOM" id="CLU_075311_0_0_9"/>
<dbReference type="PhylomeDB" id="Q99RL1"/>
<dbReference type="EvolutionaryTrace" id="Q99RL1"/>
<dbReference type="Proteomes" id="UP000002481">
    <property type="component" value="Chromosome"/>
</dbReference>
<dbReference type="GO" id="GO:0005576">
    <property type="term" value="C:extracellular region"/>
    <property type="evidence" value="ECO:0007669"/>
    <property type="project" value="InterPro"/>
</dbReference>
<dbReference type="GO" id="GO:0090729">
    <property type="term" value="F:toxin activity"/>
    <property type="evidence" value="ECO:0007669"/>
    <property type="project" value="UniProtKB-KW"/>
</dbReference>
<dbReference type="GO" id="GO:0051715">
    <property type="term" value="P:cytolysis in another organism"/>
    <property type="evidence" value="ECO:0007669"/>
    <property type="project" value="InterPro"/>
</dbReference>
<dbReference type="Gene3D" id="2.70.240.10">
    <property type="entry name" value="Leukocidin/porin MspA"/>
    <property type="match status" value="1"/>
</dbReference>
<dbReference type="InterPro" id="IPR003963">
    <property type="entry name" value="Bi-component_toxin_staph"/>
</dbReference>
<dbReference type="InterPro" id="IPR016183">
    <property type="entry name" value="Leukocidin/Hemolysin_toxin"/>
</dbReference>
<dbReference type="InterPro" id="IPR036435">
    <property type="entry name" value="Leukocidin/porin_MspA_sf"/>
</dbReference>
<dbReference type="NCBIfam" id="TIGR01002">
    <property type="entry name" value="hlyII"/>
    <property type="match status" value="1"/>
</dbReference>
<dbReference type="Pfam" id="PF07968">
    <property type="entry name" value="Leukocidin"/>
    <property type="match status" value="1"/>
</dbReference>
<dbReference type="PRINTS" id="PR01468">
    <property type="entry name" value="BICOMPNTOXIN"/>
</dbReference>
<dbReference type="SUPFAM" id="SSF56959">
    <property type="entry name" value="Leukocidin-like"/>
    <property type="match status" value="1"/>
</dbReference>
<organism>
    <name type="scientific">Staphylococcus aureus (strain Mu50 / ATCC 700699)</name>
    <dbReference type="NCBI Taxonomy" id="158878"/>
    <lineage>
        <taxon>Bacteria</taxon>
        <taxon>Bacillati</taxon>
        <taxon>Bacillota</taxon>
        <taxon>Bacilli</taxon>
        <taxon>Bacillales</taxon>
        <taxon>Staphylococcaceae</taxon>
        <taxon>Staphylococcus</taxon>
    </lineage>
</organism>
<evidence type="ECO:0000250" key="1"/>
<evidence type="ECO:0000255" key="2"/>
<evidence type="ECO:0000305" key="3"/>
<evidence type="ECO:0007829" key="4">
    <source>
        <dbReference type="PDB" id="4P1X"/>
    </source>
</evidence>
<reference key="1">
    <citation type="journal article" date="2001" name="Lancet">
        <title>Whole genome sequencing of meticillin-resistant Staphylococcus aureus.</title>
        <authorList>
            <person name="Kuroda M."/>
            <person name="Ohta T."/>
            <person name="Uchiyama I."/>
            <person name="Baba T."/>
            <person name="Yuzawa H."/>
            <person name="Kobayashi I."/>
            <person name="Cui L."/>
            <person name="Oguchi A."/>
            <person name="Aoki K."/>
            <person name="Nagai Y."/>
            <person name="Lian J.-Q."/>
            <person name="Ito T."/>
            <person name="Kanamori M."/>
            <person name="Matsumaru H."/>
            <person name="Maruyama A."/>
            <person name="Murakami H."/>
            <person name="Hosoyama A."/>
            <person name="Mizutani-Ui Y."/>
            <person name="Takahashi N.K."/>
            <person name="Sawano T."/>
            <person name="Inoue R."/>
            <person name="Kaito C."/>
            <person name="Sekimizu K."/>
            <person name="Hirakawa H."/>
            <person name="Kuhara S."/>
            <person name="Goto S."/>
            <person name="Yabuzaki J."/>
            <person name="Kanehisa M."/>
            <person name="Yamashita A."/>
            <person name="Oshima K."/>
            <person name="Furuya K."/>
            <person name="Yoshino C."/>
            <person name="Shiba T."/>
            <person name="Hattori M."/>
            <person name="Ogasawara N."/>
            <person name="Hayashi H."/>
            <person name="Hiramatsu K."/>
        </authorList>
    </citation>
    <scope>NUCLEOTIDE SEQUENCE [LARGE SCALE GENOMIC DNA]</scope>
    <source>
        <strain>Mu50 / ATCC 700699</strain>
    </source>
</reference>
<keyword id="KW-0002">3D-structure</keyword>
<keyword id="KW-0204">Cytolysis</keyword>
<keyword id="KW-0354">Hemolysis</keyword>
<keyword id="KW-0732">Signal</keyword>
<keyword id="KW-0800">Toxin</keyword>
<keyword id="KW-0843">Virulence</keyword>